<reference key="1">
    <citation type="journal article" date="2002" name="Proc. Natl. Acad. Sci. U.S.A.">
        <title>The genome sequence of the facultative intracellular pathogen Brucella melitensis.</title>
        <authorList>
            <person name="DelVecchio V.G."/>
            <person name="Kapatral V."/>
            <person name="Redkar R.J."/>
            <person name="Patra G."/>
            <person name="Mujer C."/>
            <person name="Los T."/>
            <person name="Ivanova N."/>
            <person name="Anderson I."/>
            <person name="Bhattacharyya A."/>
            <person name="Lykidis A."/>
            <person name="Reznik G."/>
            <person name="Jablonski L."/>
            <person name="Larsen N."/>
            <person name="D'Souza M."/>
            <person name="Bernal A."/>
            <person name="Mazur M."/>
            <person name="Goltsman E."/>
            <person name="Selkov E."/>
            <person name="Elzer P.H."/>
            <person name="Hagius S."/>
            <person name="O'Callaghan D."/>
            <person name="Letesson J.-J."/>
            <person name="Haselkorn R."/>
            <person name="Kyrpides N.C."/>
            <person name="Overbeek R."/>
        </authorList>
    </citation>
    <scope>NUCLEOTIDE SEQUENCE [LARGE SCALE GENOMIC DNA]</scope>
    <source>
        <strain>ATCC 23456 / CCUG 17765 / NCTC 10094 / 16M</strain>
    </source>
</reference>
<name>NIKR_BRUME</name>
<comment type="function">
    <text evidence="1">Transcriptional repressor of the nikABCDE operon. Is active in the presence of excessive concentrations of intracellular nickel (By similarity).</text>
</comment>
<comment type="cofactor">
    <cofactor evidence="1">
        <name>Ni(2+)</name>
        <dbReference type="ChEBI" id="CHEBI:49786"/>
    </cofactor>
    <text evidence="1">Binds 1 nickel ion per subunit.</text>
</comment>
<comment type="subunit">
    <text evidence="1">Homotetramer.</text>
</comment>
<comment type="similarity">
    <text evidence="2">Belongs to the transcriptional regulatory CopG/NikR family.</text>
</comment>
<comment type="sequence caution" evidence="2">
    <conflict type="erroneous initiation">
        <sequence resource="EMBL-CDS" id="AAL53728"/>
    </conflict>
</comment>
<dbReference type="EMBL" id="AE008918">
    <property type="protein sequence ID" value="AAL53728.1"/>
    <property type="status" value="ALT_INIT"/>
    <property type="molecule type" value="Genomic_DNA"/>
</dbReference>
<dbReference type="PIR" id="AE3570">
    <property type="entry name" value="AE3570"/>
</dbReference>
<dbReference type="RefSeq" id="WP_004682148.1">
    <property type="nucleotide sequence ID" value="NZ_GG703779.1"/>
</dbReference>
<dbReference type="SMR" id="Q8YCP2"/>
<dbReference type="GeneID" id="29595702"/>
<dbReference type="KEGG" id="bme:BMEII0486"/>
<dbReference type="KEGG" id="bmel:DK63_2756"/>
<dbReference type="PATRIC" id="fig|224914.52.peg.2886"/>
<dbReference type="eggNOG" id="COG0864">
    <property type="taxonomic scope" value="Bacteria"/>
</dbReference>
<dbReference type="PhylomeDB" id="Q8YCP2"/>
<dbReference type="Proteomes" id="UP000000419">
    <property type="component" value="Chromosome II"/>
</dbReference>
<dbReference type="GO" id="GO:0003677">
    <property type="term" value="F:DNA binding"/>
    <property type="evidence" value="ECO:0007669"/>
    <property type="project" value="UniProtKB-KW"/>
</dbReference>
<dbReference type="GO" id="GO:0003700">
    <property type="term" value="F:DNA-binding transcription factor activity"/>
    <property type="evidence" value="ECO:0007669"/>
    <property type="project" value="UniProtKB-UniRule"/>
</dbReference>
<dbReference type="GO" id="GO:0016151">
    <property type="term" value="F:nickel cation binding"/>
    <property type="evidence" value="ECO:0007669"/>
    <property type="project" value="UniProtKB-UniRule"/>
</dbReference>
<dbReference type="GO" id="GO:0010045">
    <property type="term" value="P:response to nickel cation"/>
    <property type="evidence" value="ECO:0007669"/>
    <property type="project" value="InterPro"/>
</dbReference>
<dbReference type="CDD" id="cd22231">
    <property type="entry name" value="RHH_NikR_HicB-like"/>
    <property type="match status" value="1"/>
</dbReference>
<dbReference type="Gene3D" id="3.30.70.1150">
    <property type="entry name" value="ACT-like. Chain A, domain 2"/>
    <property type="match status" value="1"/>
</dbReference>
<dbReference type="Gene3D" id="1.10.1220.10">
    <property type="entry name" value="Met repressor-like"/>
    <property type="match status" value="1"/>
</dbReference>
<dbReference type="HAMAP" id="MF_00476">
    <property type="entry name" value="NikR"/>
    <property type="match status" value="1"/>
</dbReference>
<dbReference type="InterPro" id="IPR027271">
    <property type="entry name" value="Acetolactate_synth/TF_NikR_C"/>
</dbReference>
<dbReference type="InterPro" id="IPR045865">
    <property type="entry name" value="ACT-like_dom_sf"/>
</dbReference>
<dbReference type="InterPro" id="IPR013321">
    <property type="entry name" value="Arc_rbn_hlx_hlx"/>
</dbReference>
<dbReference type="InterPro" id="IPR002145">
    <property type="entry name" value="CopG"/>
</dbReference>
<dbReference type="InterPro" id="IPR050192">
    <property type="entry name" value="CopG/NikR_regulator"/>
</dbReference>
<dbReference type="InterPro" id="IPR022988">
    <property type="entry name" value="Ni_resp_reg_NikR"/>
</dbReference>
<dbReference type="InterPro" id="IPR014160">
    <property type="entry name" value="Nickel_NikR_proteobac"/>
</dbReference>
<dbReference type="InterPro" id="IPR010985">
    <property type="entry name" value="Ribbon_hlx_hlx"/>
</dbReference>
<dbReference type="InterPro" id="IPR014864">
    <property type="entry name" value="TF_NikR_Ni-bd_C"/>
</dbReference>
<dbReference type="NCBIfam" id="TIGR02793">
    <property type="entry name" value="nikR"/>
    <property type="match status" value="1"/>
</dbReference>
<dbReference type="NCBIfam" id="NF002815">
    <property type="entry name" value="PRK02967.1"/>
    <property type="match status" value="1"/>
</dbReference>
<dbReference type="NCBIfam" id="NF003381">
    <property type="entry name" value="PRK04460.1"/>
    <property type="match status" value="1"/>
</dbReference>
<dbReference type="PANTHER" id="PTHR34719">
    <property type="entry name" value="NICKEL-RESPONSIVE REGULATOR"/>
    <property type="match status" value="1"/>
</dbReference>
<dbReference type="PANTHER" id="PTHR34719:SF2">
    <property type="entry name" value="NICKEL-RESPONSIVE REGULATOR"/>
    <property type="match status" value="1"/>
</dbReference>
<dbReference type="Pfam" id="PF08753">
    <property type="entry name" value="NikR_C"/>
    <property type="match status" value="1"/>
</dbReference>
<dbReference type="Pfam" id="PF01402">
    <property type="entry name" value="RHH_1"/>
    <property type="match status" value="1"/>
</dbReference>
<dbReference type="SUPFAM" id="SSF55021">
    <property type="entry name" value="ACT-like"/>
    <property type="match status" value="1"/>
</dbReference>
<dbReference type="SUPFAM" id="SSF47598">
    <property type="entry name" value="Ribbon-helix-helix"/>
    <property type="match status" value="1"/>
</dbReference>
<accession>Q8YCP2</accession>
<feature type="chain" id="PRO_0000139283" description="Nickel-responsive regulator">
    <location>
        <begin position="1"/>
        <end position="132"/>
    </location>
</feature>
<feature type="binding site" evidence="1">
    <location>
        <position position="77"/>
    </location>
    <ligand>
        <name>Ni(2+)</name>
        <dbReference type="ChEBI" id="CHEBI:49786"/>
    </ligand>
</feature>
<feature type="binding site" evidence="1">
    <location>
        <position position="88"/>
    </location>
    <ligand>
        <name>Ni(2+)</name>
        <dbReference type="ChEBI" id="CHEBI:49786"/>
    </ligand>
</feature>
<feature type="binding site" evidence="1">
    <location>
        <position position="90"/>
    </location>
    <ligand>
        <name>Ni(2+)</name>
        <dbReference type="ChEBI" id="CHEBI:49786"/>
    </ligand>
</feature>
<feature type="binding site" evidence="1">
    <location>
        <position position="96"/>
    </location>
    <ligand>
        <name>Ni(2+)</name>
        <dbReference type="ChEBI" id="CHEBI:49786"/>
    </ligand>
</feature>
<protein>
    <recommendedName>
        <fullName>Nickel-responsive regulator</fullName>
    </recommendedName>
</protein>
<sequence length="132" mass="14960">MQRITITIDDDLMAALDRMIEIKGYQNRSEALRDLARTGLQQASLEEGQMEACVGVLSYTYDHSARDLSKKLTNTHHDHHNISVASMHVHLDHDRCLEVSILKSKTDDVRHFADHVKAERHVTHGTLAVLPL</sequence>
<evidence type="ECO:0000250" key="1"/>
<evidence type="ECO:0000305" key="2"/>
<organism>
    <name type="scientific">Brucella melitensis biotype 1 (strain ATCC 23456 / CCUG 17765 / NCTC 10094 / 16M)</name>
    <dbReference type="NCBI Taxonomy" id="224914"/>
    <lineage>
        <taxon>Bacteria</taxon>
        <taxon>Pseudomonadati</taxon>
        <taxon>Pseudomonadota</taxon>
        <taxon>Alphaproteobacteria</taxon>
        <taxon>Hyphomicrobiales</taxon>
        <taxon>Brucellaceae</taxon>
        <taxon>Brucella/Ochrobactrum group</taxon>
        <taxon>Brucella</taxon>
    </lineage>
</organism>
<keyword id="KW-0238">DNA-binding</keyword>
<keyword id="KW-0479">Metal-binding</keyword>
<keyword id="KW-0533">Nickel</keyword>
<keyword id="KW-0678">Repressor</keyword>
<keyword id="KW-0804">Transcription</keyword>
<keyword id="KW-0805">Transcription regulation</keyword>
<proteinExistence type="inferred from homology"/>
<gene>
    <name type="primary">nikR</name>
    <name type="ordered locus">BMEII0486</name>
</gene>